<name>RL29_METTH</name>
<gene>
    <name type="primary">rpl29</name>
    <name type="ordered locus">MTH_9</name>
</gene>
<organism>
    <name type="scientific">Methanothermobacter thermautotrophicus (strain ATCC 29096 / DSM 1053 / JCM 10044 / NBRC 100330 / Delta H)</name>
    <name type="common">Methanobacterium thermoautotrophicum</name>
    <dbReference type="NCBI Taxonomy" id="187420"/>
    <lineage>
        <taxon>Archaea</taxon>
        <taxon>Methanobacteriati</taxon>
        <taxon>Methanobacteriota</taxon>
        <taxon>Methanomada group</taxon>
        <taxon>Methanobacteria</taxon>
        <taxon>Methanobacteriales</taxon>
        <taxon>Methanobacteriaceae</taxon>
        <taxon>Methanothermobacter</taxon>
    </lineage>
</organism>
<dbReference type="EMBL" id="AE000666">
    <property type="protein sequence ID" value="AAB84529.1"/>
    <property type="molecule type" value="Genomic_DNA"/>
</dbReference>
<dbReference type="PIR" id="C69220">
    <property type="entry name" value="C69220"/>
</dbReference>
<dbReference type="SMR" id="O26117"/>
<dbReference type="FunCoup" id="O26117">
    <property type="interactions" value="125"/>
</dbReference>
<dbReference type="STRING" id="187420.MTH_9"/>
<dbReference type="PaxDb" id="187420-MTH_9"/>
<dbReference type="EnsemblBacteria" id="AAB84529">
    <property type="protein sequence ID" value="AAB84529"/>
    <property type="gene ID" value="MTH_9"/>
</dbReference>
<dbReference type="KEGG" id="mth:MTH_9"/>
<dbReference type="PATRIC" id="fig|187420.15.peg.9"/>
<dbReference type="HOGENOM" id="CLU_158491_2_2_2"/>
<dbReference type="InParanoid" id="O26117"/>
<dbReference type="Proteomes" id="UP000005223">
    <property type="component" value="Chromosome"/>
</dbReference>
<dbReference type="GO" id="GO:1990904">
    <property type="term" value="C:ribonucleoprotein complex"/>
    <property type="evidence" value="ECO:0007669"/>
    <property type="project" value="UniProtKB-KW"/>
</dbReference>
<dbReference type="GO" id="GO:0005840">
    <property type="term" value="C:ribosome"/>
    <property type="evidence" value="ECO:0007669"/>
    <property type="project" value="UniProtKB-KW"/>
</dbReference>
<dbReference type="GO" id="GO:0003735">
    <property type="term" value="F:structural constituent of ribosome"/>
    <property type="evidence" value="ECO:0007669"/>
    <property type="project" value="InterPro"/>
</dbReference>
<dbReference type="GO" id="GO:0006412">
    <property type="term" value="P:translation"/>
    <property type="evidence" value="ECO:0007669"/>
    <property type="project" value="UniProtKB-UniRule"/>
</dbReference>
<dbReference type="CDD" id="cd00427">
    <property type="entry name" value="Ribosomal_L29_HIP"/>
    <property type="match status" value="1"/>
</dbReference>
<dbReference type="Gene3D" id="1.10.287.310">
    <property type="match status" value="1"/>
</dbReference>
<dbReference type="HAMAP" id="MF_00374">
    <property type="entry name" value="Ribosomal_uL29"/>
    <property type="match status" value="1"/>
</dbReference>
<dbReference type="InterPro" id="IPR001854">
    <property type="entry name" value="Ribosomal_uL29"/>
</dbReference>
<dbReference type="InterPro" id="IPR018254">
    <property type="entry name" value="Ribosomal_uL29_CS"/>
</dbReference>
<dbReference type="InterPro" id="IPR036049">
    <property type="entry name" value="Ribosomal_uL29_sf"/>
</dbReference>
<dbReference type="NCBIfam" id="TIGR00012">
    <property type="entry name" value="L29"/>
    <property type="match status" value="1"/>
</dbReference>
<dbReference type="Pfam" id="PF00831">
    <property type="entry name" value="Ribosomal_L29"/>
    <property type="match status" value="1"/>
</dbReference>
<dbReference type="SUPFAM" id="SSF46561">
    <property type="entry name" value="Ribosomal protein L29 (L29p)"/>
    <property type="match status" value="1"/>
</dbReference>
<dbReference type="PROSITE" id="PS00579">
    <property type="entry name" value="RIBOSOMAL_L29"/>
    <property type="match status" value="1"/>
</dbReference>
<sequence length="64" mass="7433">MAILRSEEIREMDGEELQKKLDELKAEYARYISKSAAAGIHENPGKMREIRRTIARVLTIMNEK</sequence>
<proteinExistence type="inferred from homology"/>
<protein>
    <recommendedName>
        <fullName evidence="1">Large ribosomal subunit protein uL29</fullName>
    </recommendedName>
    <alternativeName>
        <fullName>50S ribosomal protein L29</fullName>
    </alternativeName>
</protein>
<comment type="similarity">
    <text evidence="1">Belongs to the universal ribosomal protein uL29 family.</text>
</comment>
<feature type="chain" id="PRO_0000130515" description="Large ribosomal subunit protein uL29">
    <location>
        <begin position="1"/>
        <end position="64"/>
    </location>
</feature>
<evidence type="ECO:0000305" key="1"/>
<reference key="1">
    <citation type="journal article" date="1997" name="J. Bacteriol.">
        <title>Complete genome sequence of Methanobacterium thermoautotrophicum deltaH: functional analysis and comparative genomics.</title>
        <authorList>
            <person name="Smith D.R."/>
            <person name="Doucette-Stamm L.A."/>
            <person name="Deloughery C."/>
            <person name="Lee H.-M."/>
            <person name="Dubois J."/>
            <person name="Aldredge T."/>
            <person name="Bashirzadeh R."/>
            <person name="Blakely D."/>
            <person name="Cook R."/>
            <person name="Gilbert K."/>
            <person name="Harrison D."/>
            <person name="Hoang L."/>
            <person name="Keagle P."/>
            <person name="Lumm W."/>
            <person name="Pothier B."/>
            <person name="Qiu D."/>
            <person name="Spadafora R."/>
            <person name="Vicare R."/>
            <person name="Wang Y."/>
            <person name="Wierzbowski J."/>
            <person name="Gibson R."/>
            <person name="Jiwani N."/>
            <person name="Caruso A."/>
            <person name="Bush D."/>
            <person name="Safer H."/>
            <person name="Patwell D."/>
            <person name="Prabhakar S."/>
            <person name="McDougall S."/>
            <person name="Shimer G."/>
            <person name="Goyal A."/>
            <person name="Pietrovski S."/>
            <person name="Church G.M."/>
            <person name="Daniels C.J."/>
            <person name="Mao J.-I."/>
            <person name="Rice P."/>
            <person name="Noelling J."/>
            <person name="Reeve J.N."/>
        </authorList>
    </citation>
    <scope>NUCLEOTIDE SEQUENCE [LARGE SCALE GENOMIC DNA]</scope>
    <source>
        <strain>ATCC 29096 / DSM 1053 / JCM 10044 / NBRC 100330 / Delta H</strain>
    </source>
</reference>
<keyword id="KW-1185">Reference proteome</keyword>
<keyword id="KW-0687">Ribonucleoprotein</keyword>
<keyword id="KW-0689">Ribosomal protein</keyword>
<accession>O26117</accession>